<comment type="function">
    <text evidence="1">Functions as an E3 ubiquitin ligase.</text>
</comment>
<comment type="catalytic activity">
    <reaction>
        <text>S-ubiquitinyl-[E2 ubiquitin-conjugating enzyme]-L-cysteine + [acceptor protein]-L-lysine = [E2 ubiquitin-conjugating enzyme]-L-cysteine + N(6)-ubiquitinyl-[acceptor protein]-L-lysine.</text>
        <dbReference type="EC" id="2.3.2.27"/>
    </reaction>
</comment>
<comment type="pathway">
    <text>Protein modification; protein ubiquitination.</text>
</comment>
<comment type="interaction">
    <interactant intactId="EBI-4432709">
        <id>Q9LXE3</id>
    </interactant>
    <interactant intactId="EBI-4432704">
        <id>Q8L5Z0</id>
        <label>At4g33945</label>
    </interactant>
    <organismsDiffer>false</organismsDiffer>
    <experiments>3</experiments>
</comment>
<accession>Q9LXE3</accession>
<dbReference type="EC" id="2.3.2.27"/>
<dbReference type="EMBL" id="AB020752">
    <property type="protein sequence ID" value="BAB09538.1"/>
    <property type="molecule type" value="Genomic_DNA"/>
</dbReference>
<dbReference type="EMBL" id="AL353994">
    <property type="protein sequence ID" value="CAB89350.1"/>
    <property type="molecule type" value="Genomic_DNA"/>
</dbReference>
<dbReference type="EMBL" id="CP002688">
    <property type="protein sequence ID" value="AED91448.1"/>
    <property type="molecule type" value="Genomic_DNA"/>
</dbReference>
<dbReference type="EMBL" id="BT010883">
    <property type="protein sequence ID" value="AAR24661.1"/>
    <property type="molecule type" value="mRNA"/>
</dbReference>
<dbReference type="EMBL" id="AK175195">
    <property type="protein sequence ID" value="BAD42958.1"/>
    <property type="molecule type" value="mRNA"/>
</dbReference>
<dbReference type="EMBL" id="AK176549">
    <property type="protein sequence ID" value="BAD44312.1"/>
    <property type="molecule type" value="mRNA"/>
</dbReference>
<dbReference type="PIR" id="T49918">
    <property type="entry name" value="T49918"/>
</dbReference>
<dbReference type="RefSeq" id="NP_196542.1">
    <property type="nucleotide sequence ID" value="NM_121017.3"/>
</dbReference>
<dbReference type="SMR" id="Q9LXE3"/>
<dbReference type="BioGRID" id="16118">
    <property type="interactions" value="2"/>
</dbReference>
<dbReference type="FunCoup" id="Q9LXE3">
    <property type="interactions" value="182"/>
</dbReference>
<dbReference type="IntAct" id="Q9LXE3">
    <property type="interactions" value="2"/>
</dbReference>
<dbReference type="STRING" id="3702.Q9LXE3"/>
<dbReference type="PaxDb" id="3702-AT5G09800.1"/>
<dbReference type="EnsemblPlants" id="AT5G09800.1">
    <property type="protein sequence ID" value="AT5G09800.1"/>
    <property type="gene ID" value="AT5G09800"/>
</dbReference>
<dbReference type="GeneID" id="830840"/>
<dbReference type="Gramene" id="AT5G09800.1">
    <property type="protein sequence ID" value="AT5G09800.1"/>
    <property type="gene ID" value="AT5G09800"/>
</dbReference>
<dbReference type="KEGG" id="ath:AT5G09800"/>
<dbReference type="Araport" id="AT5G09800"/>
<dbReference type="TAIR" id="AT5G09800"/>
<dbReference type="eggNOG" id="ENOG502QTKN">
    <property type="taxonomic scope" value="Eukaryota"/>
</dbReference>
<dbReference type="HOGENOM" id="CLU_006348_1_1_1"/>
<dbReference type="InParanoid" id="Q9LXE3"/>
<dbReference type="OMA" id="EGRASIC"/>
<dbReference type="OrthoDB" id="10064100at2759"/>
<dbReference type="PhylomeDB" id="Q9LXE3"/>
<dbReference type="UniPathway" id="UPA00143"/>
<dbReference type="PRO" id="PR:Q9LXE3"/>
<dbReference type="Proteomes" id="UP000006548">
    <property type="component" value="Chromosome 5"/>
</dbReference>
<dbReference type="ExpressionAtlas" id="Q9LXE3">
    <property type="expression patterns" value="baseline and differential"/>
</dbReference>
<dbReference type="GO" id="GO:0061630">
    <property type="term" value="F:ubiquitin protein ligase activity"/>
    <property type="evidence" value="ECO:0007669"/>
    <property type="project" value="InterPro"/>
</dbReference>
<dbReference type="GO" id="GO:0016567">
    <property type="term" value="P:protein ubiquitination"/>
    <property type="evidence" value="ECO:0007669"/>
    <property type="project" value="UniProtKB-UniPathway"/>
</dbReference>
<dbReference type="CDD" id="cd16664">
    <property type="entry name" value="RING-Ubox_PUB"/>
    <property type="match status" value="1"/>
</dbReference>
<dbReference type="FunFam" id="3.30.40.10:FF:000502">
    <property type="entry name" value="RING-type E3 ubiquitin transferase"/>
    <property type="match status" value="1"/>
</dbReference>
<dbReference type="Gene3D" id="1.25.10.10">
    <property type="entry name" value="Leucine-rich Repeat Variant"/>
    <property type="match status" value="1"/>
</dbReference>
<dbReference type="Gene3D" id="3.30.40.10">
    <property type="entry name" value="Zinc/RING finger domain, C3HC4 (zinc finger)"/>
    <property type="match status" value="1"/>
</dbReference>
<dbReference type="InterPro" id="IPR011989">
    <property type="entry name" value="ARM-like"/>
</dbReference>
<dbReference type="InterPro" id="IPR016024">
    <property type="entry name" value="ARM-type_fold"/>
</dbReference>
<dbReference type="InterPro" id="IPR045185">
    <property type="entry name" value="PUB22/23/24-like"/>
</dbReference>
<dbReference type="InterPro" id="IPR045210">
    <property type="entry name" value="RING-Ubox_PUB"/>
</dbReference>
<dbReference type="InterPro" id="IPR003613">
    <property type="entry name" value="Ubox_domain"/>
</dbReference>
<dbReference type="InterPro" id="IPR013083">
    <property type="entry name" value="Znf_RING/FYVE/PHD"/>
</dbReference>
<dbReference type="PANTHER" id="PTHR22849:SF20">
    <property type="entry name" value="U-BOX DOMAIN-CONTAINING PROTEIN 27-RELATED"/>
    <property type="match status" value="1"/>
</dbReference>
<dbReference type="PANTHER" id="PTHR22849">
    <property type="entry name" value="WDSAM1 PROTEIN"/>
    <property type="match status" value="1"/>
</dbReference>
<dbReference type="Pfam" id="PF04564">
    <property type="entry name" value="U-box"/>
    <property type="match status" value="1"/>
</dbReference>
<dbReference type="SMART" id="SM00504">
    <property type="entry name" value="Ubox"/>
    <property type="match status" value="1"/>
</dbReference>
<dbReference type="SUPFAM" id="SSF48371">
    <property type="entry name" value="ARM repeat"/>
    <property type="match status" value="1"/>
</dbReference>
<dbReference type="SUPFAM" id="SSF57850">
    <property type="entry name" value="RING/U-box"/>
    <property type="match status" value="1"/>
</dbReference>
<dbReference type="PROSITE" id="PS51698">
    <property type="entry name" value="U_BOX"/>
    <property type="match status" value="1"/>
</dbReference>
<protein>
    <recommendedName>
        <fullName>U-box domain-containing protein 28</fullName>
        <ecNumber>2.3.2.27</ecNumber>
    </recommendedName>
    <alternativeName>
        <fullName>Plant U-box protein 28</fullName>
    </alternativeName>
    <alternativeName>
        <fullName evidence="2">RING-type E3 ubiquitin transferase PUB28</fullName>
    </alternativeName>
</protein>
<sequence length="409" mass="45775">MRSDDLYITTVPCFFKCPISLDVMKSPVSLSTGVTYDRVSIQRWLDDGNNTCPATMQILQNKEFVPNLTLHRLIDHWSDSINRRADSESPESDTPTRDEINAAIERFRIENDARSKILRFARESDENREFLAGKDDFVAMLVDLISDSRNFSDSQLLLVGEAVKILSMIRRKIFDRRRLSNLILTNGGDCLTSFFLLIKRGNPKLKIDCSAVLEFIAVDAESKLIIAKGEGLVTEIIKLISSDSDSSLIEANLSLLIAIASSKRVKLALIREKLVTKLTSLLTDPTTSVSVTEKCLKLLEAISSCKEGRSEICDGVCVETVVNKLMKVSTAATEHAVTVLWSVCYLFKEKKAQDAVIRINGVTKILLLLQSNCSLTVRHMLTDLLKVFKVNSRSCLSVYETKTTHIMPF</sequence>
<evidence type="ECO:0000250" key="1"/>
<evidence type="ECO:0000305" key="2"/>
<feature type="chain" id="PRO_0000322172" description="U-box domain-containing protein 28">
    <location>
        <begin position="1"/>
        <end position="409"/>
    </location>
</feature>
<feature type="domain" description="U-box">
    <location>
        <begin position="10"/>
        <end position="84"/>
    </location>
</feature>
<feature type="repeat" description="ARM 1">
    <location>
        <begin position="178"/>
        <end position="218"/>
    </location>
</feature>
<feature type="repeat" description="ARM 2">
    <location>
        <begin position="219"/>
        <end position="261"/>
    </location>
</feature>
<feature type="repeat" description="ARM 3">
    <location>
        <begin position="263"/>
        <end position="304"/>
    </location>
</feature>
<name>PUB28_ARATH</name>
<organism>
    <name type="scientific">Arabidopsis thaliana</name>
    <name type="common">Mouse-ear cress</name>
    <dbReference type="NCBI Taxonomy" id="3702"/>
    <lineage>
        <taxon>Eukaryota</taxon>
        <taxon>Viridiplantae</taxon>
        <taxon>Streptophyta</taxon>
        <taxon>Embryophyta</taxon>
        <taxon>Tracheophyta</taxon>
        <taxon>Spermatophyta</taxon>
        <taxon>Magnoliopsida</taxon>
        <taxon>eudicotyledons</taxon>
        <taxon>Gunneridae</taxon>
        <taxon>Pentapetalae</taxon>
        <taxon>rosids</taxon>
        <taxon>malvids</taxon>
        <taxon>Brassicales</taxon>
        <taxon>Brassicaceae</taxon>
        <taxon>Camelineae</taxon>
        <taxon>Arabidopsis</taxon>
    </lineage>
</organism>
<keyword id="KW-1185">Reference proteome</keyword>
<keyword id="KW-0677">Repeat</keyword>
<keyword id="KW-0808">Transferase</keyword>
<keyword id="KW-0833">Ubl conjugation pathway</keyword>
<proteinExistence type="evidence at protein level"/>
<reference key="1">
    <citation type="journal article" date="1999" name="DNA Res.">
        <title>Structural analysis of Arabidopsis thaliana chromosome 5. IX. Sequence features of the regions of 1,011,550 bp covered by seventeen P1 and TAC clones.</title>
        <authorList>
            <person name="Kaneko T."/>
            <person name="Katoh T."/>
            <person name="Sato S."/>
            <person name="Nakamura Y."/>
            <person name="Asamizu E."/>
            <person name="Kotani H."/>
            <person name="Miyajima N."/>
            <person name="Tabata S."/>
        </authorList>
    </citation>
    <scope>NUCLEOTIDE SEQUENCE [LARGE SCALE GENOMIC DNA]</scope>
    <source>
        <strain>cv. Columbia</strain>
    </source>
</reference>
<reference key="2">
    <citation type="journal article" date="2000" name="Nature">
        <title>Sequence and analysis of chromosome 5 of the plant Arabidopsis thaliana.</title>
        <authorList>
            <person name="Tabata S."/>
            <person name="Kaneko T."/>
            <person name="Nakamura Y."/>
            <person name="Kotani H."/>
            <person name="Kato T."/>
            <person name="Asamizu E."/>
            <person name="Miyajima N."/>
            <person name="Sasamoto S."/>
            <person name="Kimura T."/>
            <person name="Hosouchi T."/>
            <person name="Kawashima K."/>
            <person name="Kohara M."/>
            <person name="Matsumoto M."/>
            <person name="Matsuno A."/>
            <person name="Muraki A."/>
            <person name="Nakayama S."/>
            <person name="Nakazaki N."/>
            <person name="Naruo K."/>
            <person name="Okumura S."/>
            <person name="Shinpo S."/>
            <person name="Takeuchi C."/>
            <person name="Wada T."/>
            <person name="Watanabe A."/>
            <person name="Yamada M."/>
            <person name="Yasuda M."/>
            <person name="Sato S."/>
            <person name="de la Bastide M."/>
            <person name="Huang E."/>
            <person name="Spiegel L."/>
            <person name="Gnoj L."/>
            <person name="O'Shaughnessy A."/>
            <person name="Preston R."/>
            <person name="Habermann K."/>
            <person name="Murray J."/>
            <person name="Johnson D."/>
            <person name="Rohlfing T."/>
            <person name="Nelson J."/>
            <person name="Stoneking T."/>
            <person name="Pepin K."/>
            <person name="Spieth J."/>
            <person name="Sekhon M."/>
            <person name="Armstrong J."/>
            <person name="Becker M."/>
            <person name="Belter E."/>
            <person name="Cordum H."/>
            <person name="Cordes M."/>
            <person name="Courtney L."/>
            <person name="Courtney W."/>
            <person name="Dante M."/>
            <person name="Du H."/>
            <person name="Edwards J."/>
            <person name="Fryman J."/>
            <person name="Haakensen B."/>
            <person name="Lamar E."/>
            <person name="Latreille P."/>
            <person name="Leonard S."/>
            <person name="Meyer R."/>
            <person name="Mulvaney E."/>
            <person name="Ozersky P."/>
            <person name="Riley A."/>
            <person name="Strowmatt C."/>
            <person name="Wagner-McPherson C."/>
            <person name="Wollam A."/>
            <person name="Yoakum M."/>
            <person name="Bell M."/>
            <person name="Dedhia N."/>
            <person name="Parnell L."/>
            <person name="Shah R."/>
            <person name="Rodriguez M."/>
            <person name="Hoon See L."/>
            <person name="Vil D."/>
            <person name="Baker J."/>
            <person name="Kirchoff K."/>
            <person name="Toth K."/>
            <person name="King L."/>
            <person name="Bahret A."/>
            <person name="Miller B."/>
            <person name="Marra M.A."/>
            <person name="Martienssen R."/>
            <person name="McCombie W.R."/>
            <person name="Wilson R.K."/>
            <person name="Murphy G."/>
            <person name="Bancroft I."/>
            <person name="Volckaert G."/>
            <person name="Wambutt R."/>
            <person name="Duesterhoeft A."/>
            <person name="Stiekema W."/>
            <person name="Pohl T."/>
            <person name="Entian K.-D."/>
            <person name="Terryn N."/>
            <person name="Hartley N."/>
            <person name="Bent E."/>
            <person name="Johnson S."/>
            <person name="Langham S.-A."/>
            <person name="McCullagh B."/>
            <person name="Robben J."/>
            <person name="Grymonprez B."/>
            <person name="Zimmermann W."/>
            <person name="Ramsperger U."/>
            <person name="Wedler H."/>
            <person name="Balke K."/>
            <person name="Wedler E."/>
            <person name="Peters S."/>
            <person name="van Staveren M."/>
            <person name="Dirkse W."/>
            <person name="Mooijman P."/>
            <person name="Klein Lankhorst R."/>
            <person name="Weitzenegger T."/>
            <person name="Bothe G."/>
            <person name="Rose M."/>
            <person name="Hauf J."/>
            <person name="Berneiser S."/>
            <person name="Hempel S."/>
            <person name="Feldpausch M."/>
            <person name="Lamberth S."/>
            <person name="Villarroel R."/>
            <person name="Gielen J."/>
            <person name="Ardiles W."/>
            <person name="Bents O."/>
            <person name="Lemcke K."/>
            <person name="Kolesov G."/>
            <person name="Mayer K.F.X."/>
            <person name="Rudd S."/>
            <person name="Schoof H."/>
            <person name="Schueller C."/>
            <person name="Zaccaria P."/>
            <person name="Mewes H.-W."/>
            <person name="Bevan M."/>
            <person name="Fransz P.F."/>
        </authorList>
    </citation>
    <scope>NUCLEOTIDE SEQUENCE [LARGE SCALE GENOMIC DNA]</scope>
    <source>
        <strain>cv. Columbia</strain>
    </source>
</reference>
<reference key="3">
    <citation type="journal article" date="2017" name="Plant J.">
        <title>Araport11: a complete reannotation of the Arabidopsis thaliana reference genome.</title>
        <authorList>
            <person name="Cheng C.Y."/>
            <person name="Krishnakumar V."/>
            <person name="Chan A.P."/>
            <person name="Thibaud-Nissen F."/>
            <person name="Schobel S."/>
            <person name="Town C.D."/>
        </authorList>
    </citation>
    <scope>GENOME REANNOTATION</scope>
    <source>
        <strain>cv. Columbia</strain>
    </source>
</reference>
<reference key="4">
    <citation type="submission" date="2003-12" db="EMBL/GenBank/DDBJ databases">
        <title>Arabidopsis ORF clones.</title>
        <authorList>
            <person name="Kim C.J."/>
            <person name="Chen H."/>
            <person name="Cheuk R.F."/>
            <person name="Shinn P."/>
            <person name="Carninci P."/>
            <person name="Hayashizaki Y."/>
            <person name="Ishida J."/>
            <person name="Kamiya A."/>
            <person name="Kawai J."/>
            <person name="Narusaka M."/>
            <person name="Sakurai T."/>
            <person name="Satou M."/>
            <person name="Seki M."/>
            <person name="Shinozaki K."/>
            <person name="Ecker J.R."/>
        </authorList>
    </citation>
    <scope>NUCLEOTIDE SEQUENCE [LARGE SCALE MRNA]</scope>
    <source>
        <strain>cv. Columbia</strain>
    </source>
</reference>
<reference key="5">
    <citation type="submission" date="2004-09" db="EMBL/GenBank/DDBJ databases">
        <title>Large-scale analysis of RIKEN Arabidopsis full-length (RAFL) cDNAs.</title>
        <authorList>
            <person name="Totoki Y."/>
            <person name="Seki M."/>
            <person name="Ishida J."/>
            <person name="Nakajima M."/>
            <person name="Enju A."/>
            <person name="Kamiya A."/>
            <person name="Narusaka M."/>
            <person name="Shin-i T."/>
            <person name="Nakagawa M."/>
            <person name="Sakamoto N."/>
            <person name="Oishi K."/>
            <person name="Kohara Y."/>
            <person name="Kobayashi M."/>
            <person name="Toyoda A."/>
            <person name="Sakaki Y."/>
            <person name="Sakurai T."/>
            <person name="Iida K."/>
            <person name="Akiyama K."/>
            <person name="Satou M."/>
            <person name="Toyoda T."/>
            <person name="Konagaya A."/>
            <person name="Carninci P."/>
            <person name="Kawai J."/>
            <person name="Hayashizaki Y."/>
            <person name="Shinozaki K."/>
        </authorList>
    </citation>
    <scope>NUCLEOTIDE SEQUENCE [LARGE SCALE MRNA]</scope>
    <source>
        <strain>cv. Columbia</strain>
    </source>
</reference>
<reference key="6">
    <citation type="journal article" date="2001" name="Trends Plant Sci.">
        <title>The U-box protein family in plants.</title>
        <authorList>
            <person name="Azevedo C."/>
            <person name="Santos-Rosa M.J."/>
            <person name="Shirasu K."/>
        </authorList>
    </citation>
    <scope>GENE FAMILY ORGANIZATION</scope>
    <scope>NOMENCLATURE</scope>
</reference>
<reference key="7">
    <citation type="journal article" date="2004" name="Plant Physiol.">
        <title>A large complement of the predicted Arabidopsis ARM repeat proteins are members of the U-box E3 ubiquitin ligase family.</title>
        <authorList>
            <person name="Mudgil Y."/>
            <person name="Shiu S.-H."/>
            <person name="Stone S.L."/>
            <person name="Salt J.N."/>
            <person name="Goring D.R."/>
        </authorList>
    </citation>
    <scope>GENE FAMILY ORGANIZATION</scope>
</reference>
<gene>
    <name type="primary">PUB28</name>
    <name type="ordered locus">At5g09800</name>
    <name type="ORF">F17I14_10</name>
    <name type="ORF">MTH16.27</name>
</gene>